<protein>
    <recommendedName>
        <fullName evidence="1">Methionine import ATP-binding protein MetN 1</fullName>
        <ecNumber evidence="1">7.4.2.11</ecNumber>
    </recommendedName>
</protein>
<reference key="1">
    <citation type="submission" date="2006-08" db="EMBL/GenBank/DDBJ databases">
        <title>Complete sequence of chromosome 1 of Burkholderia cepacia AMMD.</title>
        <authorList>
            <person name="Copeland A."/>
            <person name="Lucas S."/>
            <person name="Lapidus A."/>
            <person name="Barry K."/>
            <person name="Detter J.C."/>
            <person name="Glavina del Rio T."/>
            <person name="Hammon N."/>
            <person name="Israni S."/>
            <person name="Pitluck S."/>
            <person name="Bruce D."/>
            <person name="Chain P."/>
            <person name="Malfatti S."/>
            <person name="Shin M."/>
            <person name="Vergez L."/>
            <person name="Schmutz J."/>
            <person name="Larimer F."/>
            <person name="Land M."/>
            <person name="Hauser L."/>
            <person name="Kyrpides N."/>
            <person name="Kim E."/>
            <person name="Parke J."/>
            <person name="Coenye T."/>
            <person name="Konstantinidis K."/>
            <person name="Ramette A."/>
            <person name="Tiedje J."/>
            <person name="Richardson P."/>
        </authorList>
    </citation>
    <scope>NUCLEOTIDE SEQUENCE [LARGE SCALE GENOMIC DNA]</scope>
    <source>
        <strain>ATCC BAA-244 / DSM 16087 / CCUG 44356 / LMG 19182 / AMMD</strain>
    </source>
</reference>
<name>METN1_BURCM</name>
<evidence type="ECO:0000255" key="1">
    <source>
        <dbReference type="HAMAP-Rule" id="MF_01719"/>
    </source>
</evidence>
<keyword id="KW-0029">Amino-acid transport</keyword>
<keyword id="KW-0067">ATP-binding</keyword>
<keyword id="KW-0997">Cell inner membrane</keyword>
<keyword id="KW-1003">Cell membrane</keyword>
<keyword id="KW-0472">Membrane</keyword>
<keyword id="KW-0547">Nucleotide-binding</keyword>
<keyword id="KW-1278">Translocase</keyword>
<keyword id="KW-0813">Transport</keyword>
<accession>Q0BH79</accession>
<dbReference type="EC" id="7.4.2.11" evidence="1"/>
<dbReference type="EMBL" id="CP000440">
    <property type="protein sequence ID" value="ABI86494.1"/>
    <property type="molecule type" value="Genomic_DNA"/>
</dbReference>
<dbReference type="RefSeq" id="WP_011656288.1">
    <property type="nucleotide sequence ID" value="NC_008390.1"/>
</dbReference>
<dbReference type="SMR" id="Q0BH79"/>
<dbReference type="GeneID" id="93083656"/>
<dbReference type="KEGG" id="bam:Bamb_0935"/>
<dbReference type="PATRIC" id="fig|339670.21.peg.639"/>
<dbReference type="eggNOG" id="COG1135">
    <property type="taxonomic scope" value="Bacteria"/>
</dbReference>
<dbReference type="Proteomes" id="UP000000662">
    <property type="component" value="Chromosome 1"/>
</dbReference>
<dbReference type="GO" id="GO:0005886">
    <property type="term" value="C:plasma membrane"/>
    <property type="evidence" value="ECO:0007669"/>
    <property type="project" value="UniProtKB-SubCell"/>
</dbReference>
<dbReference type="GO" id="GO:0033232">
    <property type="term" value="F:ABC-type D-methionine transporter activity"/>
    <property type="evidence" value="ECO:0007669"/>
    <property type="project" value="UniProtKB-EC"/>
</dbReference>
<dbReference type="GO" id="GO:0005524">
    <property type="term" value="F:ATP binding"/>
    <property type="evidence" value="ECO:0007669"/>
    <property type="project" value="UniProtKB-KW"/>
</dbReference>
<dbReference type="GO" id="GO:0016887">
    <property type="term" value="F:ATP hydrolysis activity"/>
    <property type="evidence" value="ECO:0007669"/>
    <property type="project" value="InterPro"/>
</dbReference>
<dbReference type="CDD" id="cd03258">
    <property type="entry name" value="ABC_MetN_methionine_transporter"/>
    <property type="match status" value="1"/>
</dbReference>
<dbReference type="FunFam" id="3.40.50.300:FF:000056">
    <property type="entry name" value="Cell division ATP-binding protein FtsE"/>
    <property type="match status" value="1"/>
</dbReference>
<dbReference type="Gene3D" id="3.30.70.260">
    <property type="match status" value="1"/>
</dbReference>
<dbReference type="Gene3D" id="3.40.50.300">
    <property type="entry name" value="P-loop containing nucleotide triphosphate hydrolases"/>
    <property type="match status" value="1"/>
</dbReference>
<dbReference type="InterPro" id="IPR003593">
    <property type="entry name" value="AAA+_ATPase"/>
</dbReference>
<dbReference type="InterPro" id="IPR003439">
    <property type="entry name" value="ABC_transporter-like_ATP-bd"/>
</dbReference>
<dbReference type="InterPro" id="IPR017871">
    <property type="entry name" value="ABC_transporter-like_CS"/>
</dbReference>
<dbReference type="InterPro" id="IPR045865">
    <property type="entry name" value="ACT-like_dom_sf"/>
</dbReference>
<dbReference type="InterPro" id="IPR041701">
    <property type="entry name" value="MetN_ABC"/>
</dbReference>
<dbReference type="InterPro" id="IPR050086">
    <property type="entry name" value="MetN_ABC_transporter-like"/>
</dbReference>
<dbReference type="InterPro" id="IPR018449">
    <property type="entry name" value="NIL_domain"/>
</dbReference>
<dbReference type="InterPro" id="IPR027417">
    <property type="entry name" value="P-loop_NTPase"/>
</dbReference>
<dbReference type="PANTHER" id="PTHR43166">
    <property type="entry name" value="AMINO ACID IMPORT ATP-BINDING PROTEIN"/>
    <property type="match status" value="1"/>
</dbReference>
<dbReference type="PANTHER" id="PTHR43166:SF30">
    <property type="entry name" value="METHIONINE IMPORT ATP-BINDING PROTEIN METN"/>
    <property type="match status" value="1"/>
</dbReference>
<dbReference type="Pfam" id="PF00005">
    <property type="entry name" value="ABC_tran"/>
    <property type="match status" value="1"/>
</dbReference>
<dbReference type="Pfam" id="PF09383">
    <property type="entry name" value="NIL"/>
    <property type="match status" value="1"/>
</dbReference>
<dbReference type="SMART" id="SM00382">
    <property type="entry name" value="AAA"/>
    <property type="match status" value="1"/>
</dbReference>
<dbReference type="SMART" id="SM00930">
    <property type="entry name" value="NIL"/>
    <property type="match status" value="1"/>
</dbReference>
<dbReference type="SUPFAM" id="SSF55021">
    <property type="entry name" value="ACT-like"/>
    <property type="match status" value="1"/>
</dbReference>
<dbReference type="SUPFAM" id="SSF52540">
    <property type="entry name" value="P-loop containing nucleoside triphosphate hydrolases"/>
    <property type="match status" value="1"/>
</dbReference>
<dbReference type="PROSITE" id="PS00211">
    <property type="entry name" value="ABC_TRANSPORTER_1"/>
    <property type="match status" value="1"/>
</dbReference>
<dbReference type="PROSITE" id="PS50893">
    <property type="entry name" value="ABC_TRANSPORTER_2"/>
    <property type="match status" value="1"/>
</dbReference>
<dbReference type="PROSITE" id="PS51264">
    <property type="entry name" value="METN"/>
    <property type="match status" value="1"/>
</dbReference>
<feature type="chain" id="PRO_0000277678" description="Methionine import ATP-binding protein MetN 1">
    <location>
        <begin position="1"/>
        <end position="344"/>
    </location>
</feature>
<feature type="domain" description="ABC transporter" evidence="1">
    <location>
        <begin position="2"/>
        <end position="241"/>
    </location>
</feature>
<feature type="binding site" evidence="1">
    <location>
        <begin position="38"/>
        <end position="45"/>
    </location>
    <ligand>
        <name>ATP</name>
        <dbReference type="ChEBI" id="CHEBI:30616"/>
    </ligand>
</feature>
<gene>
    <name evidence="1" type="primary">metN1</name>
    <name type="ordered locus">Bamb_0935</name>
</gene>
<sequence length="344" mass="37185">MIELRNLSQRFPGPTGWVDALHNVNLTIPQGEVFGIIGRSGAGKSTLVRTINLLTRPTEGNVVVGGRDLTLLPAGALREARREIGMIFQHFNLLSSRTVFDNVALPLELAGAGRADIEAAVLPLLDLVGLSAQKDRYPAQISGGQKQRVGIARALASKPKVLLSDEATSALDPETTRSILDLLKRINRELGLTIVLITHQMEVIKQVCDRVAVLDAGRVVEEGRVIDVFLQPHHEVTRALIGDVIAQELPPALKARVAERLKTGSGHLLRLAFTGSGVDQPILSETIRRYELDFNILHGQIDEIQGQAFGSLAVLAGGEPGKVGQALAFLREQGVVVEELSYVE</sequence>
<comment type="function">
    <text evidence="1">Part of the ABC transporter complex MetNIQ involved in methionine import. Responsible for energy coupling to the transport system.</text>
</comment>
<comment type="catalytic activity">
    <reaction evidence="1">
        <text>L-methionine(out) + ATP + H2O = L-methionine(in) + ADP + phosphate + H(+)</text>
        <dbReference type="Rhea" id="RHEA:29779"/>
        <dbReference type="ChEBI" id="CHEBI:15377"/>
        <dbReference type="ChEBI" id="CHEBI:15378"/>
        <dbReference type="ChEBI" id="CHEBI:30616"/>
        <dbReference type="ChEBI" id="CHEBI:43474"/>
        <dbReference type="ChEBI" id="CHEBI:57844"/>
        <dbReference type="ChEBI" id="CHEBI:456216"/>
        <dbReference type="EC" id="7.4.2.11"/>
    </reaction>
</comment>
<comment type="catalytic activity">
    <reaction evidence="1">
        <text>D-methionine(out) + ATP + H2O = D-methionine(in) + ADP + phosphate + H(+)</text>
        <dbReference type="Rhea" id="RHEA:29767"/>
        <dbReference type="ChEBI" id="CHEBI:15377"/>
        <dbReference type="ChEBI" id="CHEBI:15378"/>
        <dbReference type="ChEBI" id="CHEBI:30616"/>
        <dbReference type="ChEBI" id="CHEBI:43474"/>
        <dbReference type="ChEBI" id="CHEBI:57932"/>
        <dbReference type="ChEBI" id="CHEBI:456216"/>
        <dbReference type="EC" id="7.4.2.11"/>
    </reaction>
</comment>
<comment type="subunit">
    <text evidence="1">The complex is composed of two ATP-binding proteins (MetN), two transmembrane proteins (MetI) and a solute-binding protein (MetQ).</text>
</comment>
<comment type="subcellular location">
    <subcellularLocation>
        <location evidence="1">Cell inner membrane</location>
        <topology evidence="1">Peripheral membrane protein</topology>
    </subcellularLocation>
</comment>
<comment type="similarity">
    <text evidence="1">Belongs to the ABC transporter superfamily. Methionine importer (TC 3.A.1.24) family.</text>
</comment>
<organism>
    <name type="scientific">Burkholderia ambifaria (strain ATCC BAA-244 / DSM 16087 / CCUG 44356 / LMG 19182 / AMMD)</name>
    <name type="common">Burkholderia cepacia (strain AMMD)</name>
    <dbReference type="NCBI Taxonomy" id="339670"/>
    <lineage>
        <taxon>Bacteria</taxon>
        <taxon>Pseudomonadati</taxon>
        <taxon>Pseudomonadota</taxon>
        <taxon>Betaproteobacteria</taxon>
        <taxon>Burkholderiales</taxon>
        <taxon>Burkholderiaceae</taxon>
        <taxon>Burkholderia</taxon>
        <taxon>Burkholderia cepacia complex</taxon>
    </lineage>
</organism>
<proteinExistence type="inferred from homology"/>